<evidence type="ECO:0000250" key="1"/>
<evidence type="ECO:0000250" key="2">
    <source>
        <dbReference type="UniProtKB" id="O43827"/>
    </source>
</evidence>
<evidence type="ECO:0000255" key="3"/>
<evidence type="ECO:0000255" key="4">
    <source>
        <dbReference type="PROSITE-ProRule" id="PRU00739"/>
    </source>
</evidence>
<evidence type="ECO:0000269" key="5">
    <source>
    </source>
</evidence>
<proteinExistence type="evidence at transcript level"/>
<comment type="function">
    <text evidence="2 5">Has a role in the formation and organization of the extracellular matrix. In the eye, it functions as a mediator of dexamethasone-induced matrix deposition in the trabecular meshwork, the tissue responsible for the outflow of the ocular aqueous humor and for the maintenance of intraocular pressure (By similarity). Is a negative regulator of angiogenesis in the cornea, and plays a major role in maintaining corneal avascularity and transparency (PubMed:25622036).</text>
</comment>
<comment type="subunit">
    <text evidence="2">Homotetramer; disulfide-linked.</text>
</comment>
<comment type="subcellular location">
    <subcellularLocation>
        <location evidence="2">Secreted</location>
    </subcellularLocation>
</comment>
<keyword id="KW-0175">Coiled coil</keyword>
<keyword id="KW-1015">Disulfide bond</keyword>
<keyword id="KW-0325">Glycoprotein</keyword>
<keyword id="KW-1185">Reference proteome</keyword>
<keyword id="KW-0964">Secreted</keyword>
<keyword id="KW-0732">Signal</keyword>
<gene>
    <name type="primary">Angptl7</name>
</gene>
<name>ANGL7_MOUSE</name>
<dbReference type="EMBL" id="AK031675">
    <property type="protein sequence ID" value="BAC27507.1"/>
    <property type="molecule type" value="mRNA"/>
</dbReference>
<dbReference type="EMBL" id="BC023373">
    <property type="protein sequence ID" value="AAH23373.1"/>
    <property type="molecule type" value="mRNA"/>
</dbReference>
<dbReference type="CCDS" id="CCDS18938.1"/>
<dbReference type="RefSeq" id="NP_001034643.1">
    <property type="nucleotide sequence ID" value="NM_001039554.3"/>
</dbReference>
<dbReference type="SMR" id="Q8R1Q3"/>
<dbReference type="FunCoup" id="Q8R1Q3">
    <property type="interactions" value="180"/>
</dbReference>
<dbReference type="STRING" id="10090.ENSMUSP00000030840"/>
<dbReference type="GlyCosmos" id="Q8R1Q3">
    <property type="glycosylation" value="4 sites, No reported glycans"/>
</dbReference>
<dbReference type="GlyGen" id="Q8R1Q3">
    <property type="glycosylation" value="4 sites, 2 N-linked glycans (2 sites)"/>
</dbReference>
<dbReference type="iPTMnet" id="Q8R1Q3"/>
<dbReference type="PhosphoSitePlus" id="Q8R1Q3"/>
<dbReference type="jPOST" id="Q8R1Q3"/>
<dbReference type="PaxDb" id="10090-ENSMUSP00000030840"/>
<dbReference type="ProteomicsDB" id="296292"/>
<dbReference type="Antibodypedia" id="28091">
    <property type="antibodies" value="418 antibodies from 31 providers"/>
</dbReference>
<dbReference type="Ensembl" id="ENSMUST00000030840.4">
    <property type="protein sequence ID" value="ENSMUSP00000030840.4"/>
    <property type="gene ID" value="ENSMUSG00000028989.4"/>
</dbReference>
<dbReference type="GeneID" id="654812"/>
<dbReference type="KEGG" id="mmu:654812"/>
<dbReference type="UCSC" id="uc008vus.1">
    <property type="organism name" value="mouse"/>
</dbReference>
<dbReference type="AGR" id="MGI:3605801"/>
<dbReference type="CTD" id="10218"/>
<dbReference type="MGI" id="MGI:3605801">
    <property type="gene designation" value="Angptl7"/>
</dbReference>
<dbReference type="VEuPathDB" id="HostDB:ENSMUSG00000028989"/>
<dbReference type="eggNOG" id="KOG2579">
    <property type="taxonomic scope" value="Eukaryota"/>
</dbReference>
<dbReference type="GeneTree" id="ENSGT00940000157064"/>
<dbReference type="HOGENOM" id="CLU_038628_1_3_1"/>
<dbReference type="InParanoid" id="Q8R1Q3"/>
<dbReference type="OMA" id="GWHGANY"/>
<dbReference type="OrthoDB" id="9860756at2759"/>
<dbReference type="PhylomeDB" id="Q8R1Q3"/>
<dbReference type="TreeFam" id="TF329953"/>
<dbReference type="BioGRID-ORCS" id="654812">
    <property type="hits" value="1 hit in 76 CRISPR screens"/>
</dbReference>
<dbReference type="ChiTaRS" id="Angptl7">
    <property type="organism name" value="mouse"/>
</dbReference>
<dbReference type="PRO" id="PR:Q8R1Q3"/>
<dbReference type="Proteomes" id="UP000000589">
    <property type="component" value="Chromosome 4"/>
</dbReference>
<dbReference type="RNAct" id="Q8R1Q3">
    <property type="molecule type" value="protein"/>
</dbReference>
<dbReference type="Bgee" id="ENSMUSG00000028989">
    <property type="expression patterns" value="Expressed in tarsal region and 67 other cell types or tissues"/>
</dbReference>
<dbReference type="GO" id="GO:0005576">
    <property type="term" value="C:extracellular region"/>
    <property type="evidence" value="ECO:0000250"/>
    <property type="project" value="UniProtKB"/>
</dbReference>
<dbReference type="GO" id="GO:0042802">
    <property type="term" value="F:identical protein binding"/>
    <property type="evidence" value="ECO:0007669"/>
    <property type="project" value="Ensembl"/>
</dbReference>
<dbReference type="GO" id="GO:0007596">
    <property type="term" value="P:blood coagulation"/>
    <property type="evidence" value="ECO:0007669"/>
    <property type="project" value="InterPro"/>
</dbReference>
<dbReference type="GO" id="GO:1901346">
    <property type="term" value="P:negative regulation of vasculature development involved in avascular cornea development in camera-type eye"/>
    <property type="evidence" value="ECO:0000250"/>
    <property type="project" value="UniProtKB"/>
</dbReference>
<dbReference type="GO" id="GO:1903053">
    <property type="term" value="P:regulation of extracellular matrix organization"/>
    <property type="evidence" value="ECO:0000250"/>
    <property type="project" value="UniProtKB"/>
</dbReference>
<dbReference type="CDD" id="cd00087">
    <property type="entry name" value="FReD"/>
    <property type="match status" value="1"/>
</dbReference>
<dbReference type="FunFam" id="3.90.215.10:FF:000001">
    <property type="entry name" value="Tenascin isoform 1"/>
    <property type="match status" value="1"/>
</dbReference>
<dbReference type="Gene3D" id="3.90.215.10">
    <property type="entry name" value="Gamma Fibrinogen, chain A, domain 1"/>
    <property type="match status" value="1"/>
</dbReference>
<dbReference type="InterPro" id="IPR037579">
    <property type="entry name" value="FIB_ANG-like"/>
</dbReference>
<dbReference type="InterPro" id="IPR036056">
    <property type="entry name" value="Fibrinogen-like_C"/>
</dbReference>
<dbReference type="InterPro" id="IPR014716">
    <property type="entry name" value="Fibrinogen_a/b/g_C_1"/>
</dbReference>
<dbReference type="InterPro" id="IPR002181">
    <property type="entry name" value="Fibrinogen_a/b/g_C_dom"/>
</dbReference>
<dbReference type="NCBIfam" id="NF040941">
    <property type="entry name" value="GGGWT_bact"/>
    <property type="match status" value="1"/>
</dbReference>
<dbReference type="PANTHER" id="PTHR47221">
    <property type="entry name" value="FIBRINOGEN ALPHA CHAIN"/>
    <property type="match status" value="1"/>
</dbReference>
<dbReference type="PANTHER" id="PTHR47221:SF6">
    <property type="entry name" value="FIBRINOGEN ALPHA CHAIN"/>
    <property type="match status" value="1"/>
</dbReference>
<dbReference type="Pfam" id="PF00147">
    <property type="entry name" value="Fibrinogen_C"/>
    <property type="match status" value="1"/>
</dbReference>
<dbReference type="SMART" id="SM00186">
    <property type="entry name" value="FBG"/>
    <property type="match status" value="1"/>
</dbReference>
<dbReference type="SUPFAM" id="SSF56496">
    <property type="entry name" value="Fibrinogen C-terminal domain-like"/>
    <property type="match status" value="1"/>
</dbReference>
<dbReference type="PROSITE" id="PS51406">
    <property type="entry name" value="FIBRINOGEN_C_2"/>
    <property type="match status" value="1"/>
</dbReference>
<accession>Q8R1Q3</accession>
<feature type="signal peptide" evidence="1">
    <location>
        <begin position="1"/>
        <end position="21"/>
    </location>
</feature>
<feature type="chain" id="PRO_0000009132" description="Angiopoietin-related protein 7">
    <location>
        <begin position="22"/>
        <end position="337"/>
    </location>
</feature>
<feature type="domain" description="Fibrinogen C-terminal" evidence="4">
    <location>
        <begin position="113"/>
        <end position="334"/>
    </location>
</feature>
<feature type="coiled-coil region" evidence="3">
    <location>
        <begin position="30"/>
        <end position="110"/>
    </location>
</feature>
<feature type="glycosylation site" description="N-linked (GlcNAc...) asparagine" evidence="3">
    <location>
        <position position="49"/>
    </location>
</feature>
<feature type="glycosylation site" description="N-linked (GlcNAc...) asparagine" evidence="3">
    <location>
        <position position="244"/>
    </location>
</feature>
<feature type="glycosylation site" description="N-linked (GlcNAc...) asparagine" evidence="3">
    <location>
        <position position="258"/>
    </location>
</feature>
<feature type="glycosylation site" description="N-linked (GlcNAc...) asparagine" evidence="3">
    <location>
        <position position="320"/>
    </location>
</feature>
<feature type="disulfide bond" evidence="4">
    <location>
        <begin position="122"/>
        <end position="153"/>
    </location>
</feature>
<feature type="disulfide bond" evidence="4">
    <location>
        <begin position="276"/>
        <end position="289"/>
    </location>
</feature>
<protein>
    <recommendedName>
        <fullName>Angiopoietin-related protein 7</fullName>
    </recommendedName>
    <alternativeName>
        <fullName>Angiopoietin-like protein 7</fullName>
    </alternativeName>
</protein>
<sequence>MLRETWLCVILVAFVSHPVWLQKPHKRKTQLKAAGCCEEMRELKAQVANLSSLLGELSRKQESDWVSVVMQVMELESSSKHMESRLSTAESKYSEMNNQIDIMQLQAAQTVTQTSADAIYDCSSLYQKNYRISGVYKLPPDEFLGSPELEVFCDMETSGGGWTIIQRRKSGLVSFYQDWRQYKQGFGSIRGDFWLGNEHIHRLTRQPSRLRVELEDWEGNARYAEYSYFALGNELNSYRLFLGNYSGNVGKDALLYHNNTVFSTKDKDNDNCLDKCAQLRKGGYWYNCCTDSNLNGVYYRLGEHRKHMDGISWYGWHGANYSLKRVEMKIRPEAFKP</sequence>
<organism>
    <name type="scientific">Mus musculus</name>
    <name type="common">Mouse</name>
    <dbReference type="NCBI Taxonomy" id="10090"/>
    <lineage>
        <taxon>Eukaryota</taxon>
        <taxon>Metazoa</taxon>
        <taxon>Chordata</taxon>
        <taxon>Craniata</taxon>
        <taxon>Vertebrata</taxon>
        <taxon>Euteleostomi</taxon>
        <taxon>Mammalia</taxon>
        <taxon>Eutheria</taxon>
        <taxon>Euarchontoglires</taxon>
        <taxon>Glires</taxon>
        <taxon>Rodentia</taxon>
        <taxon>Myomorpha</taxon>
        <taxon>Muroidea</taxon>
        <taxon>Muridae</taxon>
        <taxon>Murinae</taxon>
        <taxon>Mus</taxon>
        <taxon>Mus</taxon>
    </lineage>
</organism>
<reference key="1">
    <citation type="journal article" date="2005" name="Science">
        <title>The transcriptional landscape of the mammalian genome.</title>
        <authorList>
            <person name="Carninci P."/>
            <person name="Kasukawa T."/>
            <person name="Katayama S."/>
            <person name="Gough J."/>
            <person name="Frith M.C."/>
            <person name="Maeda N."/>
            <person name="Oyama R."/>
            <person name="Ravasi T."/>
            <person name="Lenhard B."/>
            <person name="Wells C."/>
            <person name="Kodzius R."/>
            <person name="Shimokawa K."/>
            <person name="Bajic V.B."/>
            <person name="Brenner S.E."/>
            <person name="Batalov S."/>
            <person name="Forrest A.R."/>
            <person name="Zavolan M."/>
            <person name="Davis M.J."/>
            <person name="Wilming L.G."/>
            <person name="Aidinis V."/>
            <person name="Allen J.E."/>
            <person name="Ambesi-Impiombato A."/>
            <person name="Apweiler R."/>
            <person name="Aturaliya R.N."/>
            <person name="Bailey T.L."/>
            <person name="Bansal M."/>
            <person name="Baxter L."/>
            <person name="Beisel K.W."/>
            <person name="Bersano T."/>
            <person name="Bono H."/>
            <person name="Chalk A.M."/>
            <person name="Chiu K.P."/>
            <person name="Choudhary V."/>
            <person name="Christoffels A."/>
            <person name="Clutterbuck D.R."/>
            <person name="Crowe M.L."/>
            <person name="Dalla E."/>
            <person name="Dalrymple B.P."/>
            <person name="de Bono B."/>
            <person name="Della Gatta G."/>
            <person name="di Bernardo D."/>
            <person name="Down T."/>
            <person name="Engstrom P."/>
            <person name="Fagiolini M."/>
            <person name="Faulkner G."/>
            <person name="Fletcher C.F."/>
            <person name="Fukushima T."/>
            <person name="Furuno M."/>
            <person name="Futaki S."/>
            <person name="Gariboldi M."/>
            <person name="Georgii-Hemming P."/>
            <person name="Gingeras T.R."/>
            <person name="Gojobori T."/>
            <person name="Green R.E."/>
            <person name="Gustincich S."/>
            <person name="Harbers M."/>
            <person name="Hayashi Y."/>
            <person name="Hensch T.K."/>
            <person name="Hirokawa N."/>
            <person name="Hill D."/>
            <person name="Huminiecki L."/>
            <person name="Iacono M."/>
            <person name="Ikeo K."/>
            <person name="Iwama A."/>
            <person name="Ishikawa T."/>
            <person name="Jakt M."/>
            <person name="Kanapin A."/>
            <person name="Katoh M."/>
            <person name="Kawasawa Y."/>
            <person name="Kelso J."/>
            <person name="Kitamura H."/>
            <person name="Kitano H."/>
            <person name="Kollias G."/>
            <person name="Krishnan S.P."/>
            <person name="Kruger A."/>
            <person name="Kummerfeld S.K."/>
            <person name="Kurochkin I.V."/>
            <person name="Lareau L.F."/>
            <person name="Lazarevic D."/>
            <person name="Lipovich L."/>
            <person name="Liu J."/>
            <person name="Liuni S."/>
            <person name="McWilliam S."/>
            <person name="Madan Babu M."/>
            <person name="Madera M."/>
            <person name="Marchionni L."/>
            <person name="Matsuda H."/>
            <person name="Matsuzawa S."/>
            <person name="Miki H."/>
            <person name="Mignone F."/>
            <person name="Miyake S."/>
            <person name="Morris K."/>
            <person name="Mottagui-Tabar S."/>
            <person name="Mulder N."/>
            <person name="Nakano N."/>
            <person name="Nakauchi H."/>
            <person name="Ng P."/>
            <person name="Nilsson R."/>
            <person name="Nishiguchi S."/>
            <person name="Nishikawa S."/>
            <person name="Nori F."/>
            <person name="Ohara O."/>
            <person name="Okazaki Y."/>
            <person name="Orlando V."/>
            <person name="Pang K.C."/>
            <person name="Pavan W.J."/>
            <person name="Pavesi G."/>
            <person name="Pesole G."/>
            <person name="Petrovsky N."/>
            <person name="Piazza S."/>
            <person name="Reed J."/>
            <person name="Reid J.F."/>
            <person name="Ring B.Z."/>
            <person name="Ringwald M."/>
            <person name="Rost B."/>
            <person name="Ruan Y."/>
            <person name="Salzberg S.L."/>
            <person name="Sandelin A."/>
            <person name="Schneider C."/>
            <person name="Schoenbach C."/>
            <person name="Sekiguchi K."/>
            <person name="Semple C.A."/>
            <person name="Seno S."/>
            <person name="Sessa L."/>
            <person name="Sheng Y."/>
            <person name="Shibata Y."/>
            <person name="Shimada H."/>
            <person name="Shimada K."/>
            <person name="Silva D."/>
            <person name="Sinclair B."/>
            <person name="Sperling S."/>
            <person name="Stupka E."/>
            <person name="Sugiura K."/>
            <person name="Sultana R."/>
            <person name="Takenaka Y."/>
            <person name="Taki K."/>
            <person name="Tammoja K."/>
            <person name="Tan S.L."/>
            <person name="Tang S."/>
            <person name="Taylor M.S."/>
            <person name="Tegner J."/>
            <person name="Teichmann S.A."/>
            <person name="Ueda H.R."/>
            <person name="van Nimwegen E."/>
            <person name="Verardo R."/>
            <person name="Wei C.L."/>
            <person name="Yagi K."/>
            <person name="Yamanishi H."/>
            <person name="Zabarovsky E."/>
            <person name="Zhu S."/>
            <person name="Zimmer A."/>
            <person name="Hide W."/>
            <person name="Bult C."/>
            <person name="Grimmond S.M."/>
            <person name="Teasdale R.D."/>
            <person name="Liu E.T."/>
            <person name="Brusic V."/>
            <person name="Quackenbush J."/>
            <person name="Wahlestedt C."/>
            <person name="Mattick J.S."/>
            <person name="Hume D.A."/>
            <person name="Kai C."/>
            <person name="Sasaki D."/>
            <person name="Tomaru Y."/>
            <person name="Fukuda S."/>
            <person name="Kanamori-Katayama M."/>
            <person name="Suzuki M."/>
            <person name="Aoki J."/>
            <person name="Arakawa T."/>
            <person name="Iida J."/>
            <person name="Imamura K."/>
            <person name="Itoh M."/>
            <person name="Kato T."/>
            <person name="Kawaji H."/>
            <person name="Kawagashira N."/>
            <person name="Kawashima T."/>
            <person name="Kojima M."/>
            <person name="Kondo S."/>
            <person name="Konno H."/>
            <person name="Nakano K."/>
            <person name="Ninomiya N."/>
            <person name="Nishio T."/>
            <person name="Okada M."/>
            <person name="Plessy C."/>
            <person name="Shibata K."/>
            <person name="Shiraki T."/>
            <person name="Suzuki S."/>
            <person name="Tagami M."/>
            <person name="Waki K."/>
            <person name="Watahiki A."/>
            <person name="Okamura-Oho Y."/>
            <person name="Suzuki H."/>
            <person name="Kawai J."/>
            <person name="Hayashizaki Y."/>
        </authorList>
    </citation>
    <scope>NUCLEOTIDE SEQUENCE [LARGE SCALE MRNA]</scope>
    <source>
        <strain>C57BL/6J</strain>
        <tissue>Testis</tissue>
    </source>
</reference>
<reference key="2">
    <citation type="journal article" date="2004" name="Genome Res.">
        <title>The status, quality, and expansion of the NIH full-length cDNA project: the Mammalian Gene Collection (MGC).</title>
        <authorList>
            <consortium name="The MGC Project Team"/>
        </authorList>
    </citation>
    <scope>NUCLEOTIDE SEQUENCE [LARGE SCALE MRNA]</scope>
    <source>
        <strain>FVB/N</strain>
        <tissue>Kidney</tissue>
    </source>
</reference>
<reference key="3">
    <citation type="journal article" date="2015" name="PLoS ONE">
        <title>Angiopoietin-like 7 is an anti-angiogenic protein required to prevent vascularization of the cornea.</title>
        <authorList>
            <person name="Toyono T."/>
            <person name="Usui T."/>
            <person name="Yokoo S."/>
            <person name="Taketani Y."/>
            <person name="Nakagawa S."/>
            <person name="Kuroda M."/>
            <person name="Yamagami S."/>
            <person name="Amano S."/>
        </authorList>
    </citation>
    <scope>FUNCTION</scope>
</reference>